<evidence type="ECO:0000255" key="1">
    <source>
        <dbReference type="HAMAP-Rule" id="MF_01411"/>
    </source>
</evidence>
<reference key="1">
    <citation type="journal article" date="2006" name="J. Bacteriol.">
        <title>The genome sequence of the obligately chemolithoautotrophic, facultatively anaerobic bacterium Thiobacillus denitrificans.</title>
        <authorList>
            <person name="Beller H.R."/>
            <person name="Chain P.S."/>
            <person name="Letain T.E."/>
            <person name="Chakicherla A."/>
            <person name="Larimer F.W."/>
            <person name="Richardson P.M."/>
            <person name="Coleman M.A."/>
            <person name="Wood A.P."/>
            <person name="Kelly D.P."/>
        </authorList>
    </citation>
    <scope>NUCLEOTIDE SEQUENCE [LARGE SCALE GENOMIC DNA]</scope>
    <source>
        <strain>ATCC 25259 / T1</strain>
    </source>
</reference>
<keyword id="KW-0998">Cell outer membrane</keyword>
<keyword id="KW-0472">Membrane</keyword>
<keyword id="KW-1185">Reference proteome</keyword>
<keyword id="KW-0732">Signal</keyword>
<comment type="function">
    <text evidence="1">Together with LptE, is involved in the assembly of lipopolysaccharide (LPS) at the surface of the outer membrane.</text>
</comment>
<comment type="subunit">
    <text evidence="1">Component of the lipopolysaccharide transport and assembly complex. Interacts with LptE and LptA.</text>
</comment>
<comment type="subcellular location">
    <subcellularLocation>
        <location evidence="1">Cell outer membrane</location>
    </subcellularLocation>
</comment>
<comment type="similarity">
    <text evidence="1">Belongs to the LptD family.</text>
</comment>
<name>LPTD_THIDA</name>
<organism>
    <name type="scientific">Thiobacillus denitrificans (strain ATCC 25259 / T1)</name>
    <dbReference type="NCBI Taxonomy" id="292415"/>
    <lineage>
        <taxon>Bacteria</taxon>
        <taxon>Pseudomonadati</taxon>
        <taxon>Pseudomonadota</taxon>
        <taxon>Betaproteobacteria</taxon>
        <taxon>Nitrosomonadales</taxon>
        <taxon>Thiobacillaceae</taxon>
        <taxon>Thiobacillus</taxon>
    </lineage>
</organism>
<gene>
    <name evidence="1" type="primary">lptD</name>
    <name type="synonym">imp</name>
    <name type="synonym">ostA</name>
    <name type="ordered locus">Tbd_2337</name>
</gene>
<feature type="signal peptide" evidence="1">
    <location>
        <begin position="1"/>
        <end position="21"/>
    </location>
</feature>
<feature type="chain" id="PRO_5000103619" description="LPS-assembly protein LptD">
    <location>
        <begin position="22"/>
        <end position="728"/>
    </location>
</feature>
<accession>Q3SGG0</accession>
<protein>
    <recommendedName>
        <fullName evidence="1">LPS-assembly protein LptD</fullName>
    </recommendedName>
</protein>
<proteinExistence type="inferred from homology"/>
<sequence>MSALPGFTLAALLLNVSLAEANGLVLKKDLELKGSTVAGKEAPLFLTADRIDSTAVGIIEAAGRVEARQAGRNFFADWLRYDTRENSVQARGKVRLEQPALLVTGDSLDIDLDTYSGQLAAPVYRFVGQPGRGDAERIDFIDENNFSLADATYTTCSVEDEDWYLKIADLDIDRGRDVGTAHHASLRFLGVPILYTPWMSFPLGDARKSGILAPTIGTTERSGLDIVVPYYLNLAPNYDATLYPRLLSKRGVQLGGEFRYLLEDARGVNRVEYLDDSEAARTRWSVALNNSYRLNANTQAGMLFDRVSDDDYFRDLSNLISITSLSHLNREVWVTTQHAHWNAELRAQSFQTLQDSTASTPIAEPYARLPHARLGAAQTFGRFEFTLESEATRFAHPTKTEGTRVLAYPTLRMPLVNDYGFLTPQIGWHSTYYALDESAADDNIVRNLPIFSLDSGVVFDRPMRFSGVDFEQTLEPRVYYVYAPYRDQDDIPIFDTGLLDFSYAQMFTPNQFIGGDRINDANQLTVAVTSRFVEAESGLERLQVTLGQRYYFTPQRVTLPGVDPRSDNTTDLLAAVSGQITRDWRIDTAWQFDTQNGTVIRQNLGASYRPGPGRAINFGYRFIDQTTEQVDVSAQWPLGRRWYGMFRYNYSFQDDKLVEGLAGLEYNGGCWALRTVFQRLATKEDQSTDALFFQLELNGMGRLGSNPLDVLKQSVPGYRPSNEILPTP</sequence>
<dbReference type="EMBL" id="CP000116">
    <property type="protein sequence ID" value="AAZ98290.1"/>
    <property type="molecule type" value="Genomic_DNA"/>
</dbReference>
<dbReference type="RefSeq" id="WP_011312849.1">
    <property type="nucleotide sequence ID" value="NC_007404.1"/>
</dbReference>
<dbReference type="SMR" id="Q3SGG0"/>
<dbReference type="STRING" id="292415.Tbd_2337"/>
<dbReference type="KEGG" id="tbd:Tbd_2337"/>
<dbReference type="eggNOG" id="COG1452">
    <property type="taxonomic scope" value="Bacteria"/>
</dbReference>
<dbReference type="HOGENOM" id="CLU_009039_0_0_4"/>
<dbReference type="OrthoDB" id="9760225at2"/>
<dbReference type="Proteomes" id="UP000008291">
    <property type="component" value="Chromosome"/>
</dbReference>
<dbReference type="GO" id="GO:0009279">
    <property type="term" value="C:cell outer membrane"/>
    <property type="evidence" value="ECO:0007669"/>
    <property type="project" value="UniProtKB-SubCell"/>
</dbReference>
<dbReference type="GO" id="GO:1990351">
    <property type="term" value="C:transporter complex"/>
    <property type="evidence" value="ECO:0007669"/>
    <property type="project" value="TreeGrafter"/>
</dbReference>
<dbReference type="GO" id="GO:0043165">
    <property type="term" value="P:Gram-negative-bacterium-type cell outer membrane assembly"/>
    <property type="evidence" value="ECO:0007669"/>
    <property type="project" value="UniProtKB-UniRule"/>
</dbReference>
<dbReference type="GO" id="GO:0015920">
    <property type="term" value="P:lipopolysaccharide transport"/>
    <property type="evidence" value="ECO:0007669"/>
    <property type="project" value="InterPro"/>
</dbReference>
<dbReference type="HAMAP" id="MF_01411">
    <property type="entry name" value="LPS_assembly_LptD"/>
    <property type="match status" value="1"/>
</dbReference>
<dbReference type="InterPro" id="IPR020889">
    <property type="entry name" value="LipoPS_assembly_LptD"/>
</dbReference>
<dbReference type="InterPro" id="IPR050218">
    <property type="entry name" value="LptD"/>
</dbReference>
<dbReference type="InterPro" id="IPR045659">
    <property type="entry name" value="LptD_2"/>
</dbReference>
<dbReference type="InterPro" id="IPR007543">
    <property type="entry name" value="LptD_C"/>
</dbReference>
<dbReference type="PANTHER" id="PTHR30189">
    <property type="entry name" value="LPS-ASSEMBLY PROTEIN"/>
    <property type="match status" value="1"/>
</dbReference>
<dbReference type="PANTHER" id="PTHR30189:SF1">
    <property type="entry name" value="LPS-ASSEMBLY PROTEIN LPTD"/>
    <property type="match status" value="1"/>
</dbReference>
<dbReference type="Pfam" id="PF04453">
    <property type="entry name" value="LptD"/>
    <property type="match status" value="1"/>
</dbReference>
<dbReference type="Pfam" id="PF19838">
    <property type="entry name" value="LptD_2"/>
    <property type="match status" value="1"/>
</dbReference>